<organism>
    <name type="scientific">Erinaceus europaeus</name>
    <name type="common">Western European hedgehog</name>
    <dbReference type="NCBI Taxonomy" id="9365"/>
    <lineage>
        <taxon>Eukaryota</taxon>
        <taxon>Metazoa</taxon>
        <taxon>Chordata</taxon>
        <taxon>Craniata</taxon>
        <taxon>Vertebrata</taxon>
        <taxon>Euteleostomi</taxon>
        <taxon>Mammalia</taxon>
        <taxon>Eutheria</taxon>
        <taxon>Laurasiatheria</taxon>
        <taxon>Eulipotyphla</taxon>
        <taxon>Erinaceidae</taxon>
        <taxon>Erinaceinae</taxon>
        <taxon>Erinaceus</taxon>
    </lineage>
</organism>
<reference key="1">
    <citation type="journal article" date="1998" name="Mol. Phylogenet. Evol.">
        <title>Highly congruent molecular support for a diverse superordinal clade of endemic African mammals.</title>
        <authorList>
            <person name="Stanhope M.J."/>
            <person name="Madsen O.J."/>
            <person name="Waddell V.G."/>
            <person name="Cleven G.C."/>
            <person name="de Jong W.W."/>
            <person name="Springer M.S."/>
        </authorList>
    </citation>
    <scope>NUCLEOTIDE SEQUENCE [GENOMIC DNA]</scope>
</reference>
<protein>
    <recommendedName>
        <fullName evidence="3">Aquaporin-2</fullName>
        <shortName>AQP-2</shortName>
    </recommendedName>
    <alternativeName>
        <fullName>ADH water channel</fullName>
    </alternativeName>
    <alternativeName>
        <fullName>Aquaporin-CD</fullName>
        <shortName>AQP-CD</shortName>
    </alternativeName>
    <alternativeName>
        <fullName>Collecting duct water channel protein</fullName>
    </alternativeName>
    <alternativeName>
        <fullName>WCH-CD</fullName>
    </alternativeName>
    <alternativeName>
        <fullName>Water channel protein for renal collecting duct</fullName>
    </alternativeName>
</protein>
<dbReference type="EMBL" id="Y15950">
    <property type="protein sequence ID" value="CAA75903.1"/>
    <property type="molecule type" value="Genomic_DNA"/>
</dbReference>
<dbReference type="SMR" id="O77722"/>
<dbReference type="STRING" id="9365.ENSEEUP00000002145"/>
<dbReference type="eggNOG" id="KOG0223">
    <property type="taxonomic scope" value="Eukaryota"/>
</dbReference>
<dbReference type="InParanoid" id="O77722"/>
<dbReference type="Proteomes" id="UP000079721">
    <property type="component" value="Unplaced"/>
</dbReference>
<dbReference type="GO" id="GO:0016324">
    <property type="term" value="C:apical plasma membrane"/>
    <property type="evidence" value="ECO:0000250"/>
    <property type="project" value="UniProtKB"/>
</dbReference>
<dbReference type="GO" id="GO:0016323">
    <property type="term" value="C:basolateral plasma membrane"/>
    <property type="evidence" value="ECO:0007669"/>
    <property type="project" value="UniProtKB-SubCell"/>
</dbReference>
<dbReference type="GO" id="GO:0030659">
    <property type="term" value="C:cytoplasmic vesicle membrane"/>
    <property type="evidence" value="ECO:0007669"/>
    <property type="project" value="UniProtKB-SubCell"/>
</dbReference>
<dbReference type="GO" id="GO:0005794">
    <property type="term" value="C:Golgi apparatus"/>
    <property type="evidence" value="ECO:0007669"/>
    <property type="project" value="UniProtKB-SubCell"/>
</dbReference>
<dbReference type="GO" id="GO:0005886">
    <property type="term" value="C:plasma membrane"/>
    <property type="evidence" value="ECO:0000250"/>
    <property type="project" value="UniProtKB"/>
</dbReference>
<dbReference type="GO" id="GO:0015250">
    <property type="term" value="F:water channel activity"/>
    <property type="evidence" value="ECO:0000250"/>
    <property type="project" value="UniProtKB"/>
</dbReference>
<dbReference type="GO" id="GO:0051289">
    <property type="term" value="P:protein homotetramerization"/>
    <property type="evidence" value="ECO:0000250"/>
    <property type="project" value="UniProtKB"/>
</dbReference>
<dbReference type="GO" id="GO:0006833">
    <property type="term" value="P:water transport"/>
    <property type="evidence" value="ECO:0000250"/>
    <property type="project" value="UniProtKB"/>
</dbReference>
<dbReference type="FunFam" id="1.20.1080.10:FF:000032">
    <property type="entry name" value="Aquaporin-2"/>
    <property type="match status" value="1"/>
</dbReference>
<dbReference type="Gene3D" id="1.20.1080.10">
    <property type="entry name" value="Glycerol uptake facilitator protein"/>
    <property type="match status" value="1"/>
</dbReference>
<dbReference type="InterPro" id="IPR023271">
    <property type="entry name" value="Aquaporin-like"/>
</dbReference>
<dbReference type="InterPro" id="IPR034294">
    <property type="entry name" value="Aquaporin_transptr"/>
</dbReference>
<dbReference type="InterPro" id="IPR000425">
    <property type="entry name" value="MIP"/>
</dbReference>
<dbReference type="InterPro" id="IPR022357">
    <property type="entry name" value="MIP_CS"/>
</dbReference>
<dbReference type="PANTHER" id="PTHR19139">
    <property type="entry name" value="AQUAPORIN TRANSPORTER"/>
    <property type="match status" value="1"/>
</dbReference>
<dbReference type="PANTHER" id="PTHR19139:SF45">
    <property type="entry name" value="AQUAPORIN-2"/>
    <property type="match status" value="1"/>
</dbReference>
<dbReference type="Pfam" id="PF00230">
    <property type="entry name" value="MIP"/>
    <property type="match status" value="1"/>
</dbReference>
<dbReference type="PRINTS" id="PR02014">
    <property type="entry name" value="AQUAPORIN2"/>
</dbReference>
<dbReference type="PRINTS" id="PR00783">
    <property type="entry name" value="MINTRINSICP"/>
</dbReference>
<dbReference type="SUPFAM" id="SSF81338">
    <property type="entry name" value="Aquaporin-like"/>
    <property type="match status" value="1"/>
</dbReference>
<dbReference type="PROSITE" id="PS00221">
    <property type="entry name" value="MIP"/>
    <property type="match status" value="1"/>
</dbReference>
<accession>O77722</accession>
<name>AQP2_ERIEU</name>
<sequence>SIAFSRAVFTEFLATLLFVFFGLGSALNWPQALPSVLQIAMAFGLAIGTLVQMLGHISGAHINPAVTVACLVGCHISFLRAAFYVAAQLLGAVAGAALLHEVTPPSIRG</sequence>
<keyword id="KW-1003">Cell membrane</keyword>
<keyword id="KW-0968">Cytoplasmic vesicle</keyword>
<keyword id="KW-0325">Glycoprotein</keyword>
<keyword id="KW-0333">Golgi apparatus</keyword>
<keyword id="KW-0472">Membrane</keyword>
<keyword id="KW-0597">Phosphoprotein</keyword>
<keyword id="KW-1185">Reference proteome</keyword>
<keyword id="KW-0812">Transmembrane</keyword>
<keyword id="KW-1133">Transmembrane helix</keyword>
<keyword id="KW-0813">Transport</keyword>
<evidence type="ECO:0000250" key="1">
    <source>
        <dbReference type="UniProtKB" id="P34080"/>
    </source>
</evidence>
<evidence type="ECO:0000250" key="2">
    <source>
        <dbReference type="UniProtKB" id="P41181"/>
    </source>
</evidence>
<evidence type="ECO:0000305" key="3"/>
<comment type="function">
    <text evidence="2">Forms a water-specific channel that provides the plasma membranes of renal collecting duct with high permeability to water, thereby permitting water to move in the direction of an osmotic gradient. Plays an essential role in renal water homeostasis. Could also be permeable to glycerol.</text>
</comment>
<comment type="catalytic activity">
    <reaction evidence="2">
        <text>H2O(in) = H2O(out)</text>
        <dbReference type="Rhea" id="RHEA:29667"/>
        <dbReference type="ChEBI" id="CHEBI:15377"/>
    </reaction>
</comment>
<comment type="catalytic activity">
    <reaction evidence="2">
        <text>glycerol(in) = glycerol(out)</text>
        <dbReference type="Rhea" id="RHEA:29675"/>
        <dbReference type="ChEBI" id="CHEBI:17754"/>
    </reaction>
</comment>
<comment type="subunit">
    <text evidence="2">Homotetramer.</text>
</comment>
<comment type="subcellular location">
    <subcellularLocation>
        <location evidence="2">Apical cell membrane</location>
        <topology evidence="2">Multi-pass membrane protein</topology>
    </subcellularLocation>
    <subcellularLocation>
        <location evidence="1">Basolateral cell membrane</location>
        <topology evidence="2">Multi-pass membrane protein</topology>
    </subcellularLocation>
    <subcellularLocation>
        <location evidence="2">Cell membrane</location>
        <topology evidence="2">Multi-pass membrane protein</topology>
    </subcellularLocation>
    <subcellularLocation>
        <location evidence="2">Cytoplasmic vesicle membrane</location>
        <topology evidence="2">Multi-pass membrane protein</topology>
    </subcellularLocation>
    <subcellularLocation>
        <location evidence="2">Golgi apparatus</location>
        <location evidence="2">trans-Golgi network membrane</location>
        <topology evidence="2">Multi-pass membrane protein</topology>
    </subcellularLocation>
    <text evidence="2">Shuttles from vesicles to the apical membrane. Vasopressin-regulated phosphorylation is required for translocation to the apical cell membrane. PLEKHA8/FAPP2 is required to transport AQP2 from the TGN to sites where AQP2 is phosphorylated.</text>
</comment>
<comment type="domain">
    <text evidence="2">Aquaporins contain two tandem repeats each containing three membrane-spanning domains and a pore-forming loop with the signature motif Asn-Pro-Ala (NPA).</text>
</comment>
<comment type="PTM">
    <text evidence="2">Serine phosphorylation is necessary and sufficient for expression at the apical membrane. Endocytosis is not phosphorylation-dependent.</text>
</comment>
<comment type="PTM">
    <text evidence="2">N-glycosylated.</text>
</comment>
<comment type="similarity">
    <text evidence="3">Belongs to the MIP/aquaporin (TC 1.A.8) family.</text>
</comment>
<feature type="chain" id="PRO_0000063932" description="Aquaporin-2">
    <location>
        <begin position="1" status="less than"/>
        <end position="109" status="greater than"/>
    </location>
</feature>
<feature type="topological domain" description="Cytoplasmic" evidence="3">
    <location>
        <begin position="1" status="less than"/>
        <end position="6"/>
    </location>
</feature>
<feature type="transmembrane region" description="Helical" evidence="2">
    <location>
        <begin position="7"/>
        <end position="27"/>
    </location>
</feature>
<feature type="topological domain" description="Extracellular" evidence="3">
    <location>
        <begin position="28"/>
        <end position="35"/>
    </location>
</feature>
<feature type="transmembrane region" description="Helical" evidence="2">
    <location>
        <begin position="36"/>
        <end position="54"/>
    </location>
</feature>
<feature type="topological domain" description="Cytoplasmic" evidence="3">
    <location>
        <begin position="55"/>
        <end position="59"/>
    </location>
</feature>
<feature type="intramembrane region" description="Discontinuously helical" evidence="2">
    <location>
        <begin position="60"/>
        <end position="69"/>
    </location>
</feature>
<feature type="topological domain" description="Cytoplasmic" evidence="3">
    <location>
        <begin position="70"/>
        <end position="80"/>
    </location>
</feature>
<feature type="transmembrane region" description="Helical" evidence="2">
    <location>
        <begin position="81"/>
        <end position="102"/>
    </location>
</feature>
<feature type="topological domain" description="Extracellular" evidence="3">
    <location>
        <begin position="103"/>
        <end position="109" status="greater than"/>
    </location>
</feature>
<feature type="short sequence motif" description="NPA 1" evidence="2">
    <location>
        <begin position="63"/>
        <end position="65"/>
    </location>
</feature>
<feature type="non-terminal residue">
    <location>
        <position position="1"/>
    </location>
</feature>
<feature type="non-terminal residue">
    <location>
        <position position="109"/>
    </location>
</feature>
<gene>
    <name evidence="2" type="primary">AQP2</name>
</gene>
<proteinExistence type="inferred from homology"/>